<accession>Q9UJ42</accession>
<accession>D3DNQ2</accession>
<comment type="function">
    <text>Orphan receptor.</text>
</comment>
<comment type="interaction">
    <interactant intactId="EBI-25885139">
        <id>Q9UJ42</id>
    </interactant>
    <interactant intactId="EBI-11742507">
        <id>Q8TAP4-4</id>
        <label>LMO3</label>
    </interactant>
    <organismsDiffer>false</organismsDiffer>
    <experiments>3</experiments>
</comment>
<comment type="interaction">
    <interactant intactId="EBI-25885139">
        <id>Q9UJ42</id>
    </interactant>
    <interactant intactId="EBI-1383528">
        <id>P17252</id>
        <label>PRKCA</label>
    </interactant>
    <organismsDiffer>false</organismsDiffer>
    <experiments>3</experiments>
</comment>
<comment type="interaction">
    <interactant intactId="EBI-25885139">
        <id>Q9UJ42</id>
    </interactant>
    <interactant intactId="EBI-9090795">
        <id>Q15047-2</id>
        <label>SETDB1</label>
    </interactant>
    <organismsDiffer>false</organismsDiffer>
    <experiments>3</experiments>
</comment>
<comment type="interaction">
    <interactant intactId="EBI-25885139">
        <id>Q9UJ42</id>
    </interactant>
    <interactant intactId="EBI-359832">
        <id>P61981</id>
        <label>YWHAG</label>
    </interactant>
    <organismsDiffer>false</organismsDiffer>
    <experiments>3</experiments>
</comment>
<comment type="subcellular location">
    <subcellularLocation>
        <location>Cell membrane</location>
        <topology>Multi-pass membrane protein</topology>
    </subcellularLocation>
</comment>
<comment type="similarity">
    <text evidence="2">Belongs to the G-protein coupled receptor 1 family.</text>
</comment>
<keyword id="KW-1003">Cell membrane</keyword>
<keyword id="KW-0297">G-protein coupled receptor</keyword>
<keyword id="KW-0325">Glycoprotein</keyword>
<keyword id="KW-0472">Membrane</keyword>
<keyword id="KW-0675">Receptor</keyword>
<keyword id="KW-1185">Reference proteome</keyword>
<keyword id="KW-0807">Transducer</keyword>
<keyword id="KW-0812">Transmembrane</keyword>
<keyword id="KW-1133">Transmembrane helix</keyword>
<reference key="1">
    <citation type="journal article" date="2000" name="Brief. Bioinform.">
        <title>Mining of assembled expressed sequence tag (EST) data for protein families: application to the G protein-coupled receptor superfamily.</title>
        <authorList>
            <person name="Conklin D."/>
            <person name="Yee D.P."/>
            <person name="Millar R."/>
            <person name="Engelbrecht J."/>
            <person name="Vissing H."/>
        </authorList>
    </citation>
    <scope>NUCLEOTIDE SEQUENCE [MRNA]</scope>
    <source>
        <tissue>Pancreas</tissue>
    </source>
</reference>
<reference key="2">
    <citation type="journal article" date="2002" name="FEBS Lett.">
        <title>Identification of G protein-coupled receptor genes from the human genome sequence.</title>
        <authorList>
            <person name="Takeda S."/>
            <person name="Kadowaki S."/>
            <person name="Haga T."/>
            <person name="Takaesu H."/>
            <person name="Mitaku S."/>
        </authorList>
    </citation>
    <scope>NUCLEOTIDE SEQUENCE [LARGE SCALE GENOMIC DNA]</scope>
</reference>
<reference key="3">
    <citation type="submission" date="2005-09" db="EMBL/GenBank/DDBJ databases">
        <authorList>
            <person name="Mural R.J."/>
            <person name="Istrail S."/>
            <person name="Sutton G.G."/>
            <person name="Florea L."/>
            <person name="Halpern A.L."/>
            <person name="Mobarry C.M."/>
            <person name="Lippert R."/>
            <person name="Walenz B."/>
            <person name="Shatkay H."/>
            <person name="Dew I."/>
            <person name="Miller J.R."/>
            <person name="Flanigan M.J."/>
            <person name="Edwards N.J."/>
            <person name="Bolanos R."/>
            <person name="Fasulo D."/>
            <person name="Halldorsson B.V."/>
            <person name="Hannenhalli S."/>
            <person name="Turner R."/>
            <person name="Yooseph S."/>
            <person name="Lu F."/>
            <person name="Nusskern D.R."/>
            <person name="Shue B.C."/>
            <person name="Zheng X.H."/>
            <person name="Zhong F."/>
            <person name="Delcher A.L."/>
            <person name="Huson D.H."/>
            <person name="Kravitz S.A."/>
            <person name="Mouchard L."/>
            <person name="Reinert K."/>
            <person name="Remington K.A."/>
            <person name="Clark A.G."/>
            <person name="Waterman M.S."/>
            <person name="Eichler E.E."/>
            <person name="Adams M.D."/>
            <person name="Hunkapiller M.W."/>
            <person name="Myers E.W."/>
            <person name="Venter J.C."/>
        </authorList>
    </citation>
    <scope>NUCLEOTIDE SEQUENCE [LARGE SCALE GENOMIC DNA]</scope>
</reference>
<reference key="4">
    <citation type="journal article" date="2004" name="Genome Res.">
        <title>The status, quality, and expansion of the NIH full-length cDNA project: the Mammalian Gene Collection (MGC).</title>
        <authorList>
            <consortium name="The MGC Project Team"/>
        </authorList>
    </citation>
    <scope>NUCLEOTIDE SEQUENCE [LARGE SCALE MRNA]</scope>
    <source>
        <tissue>Cervix</tissue>
    </source>
</reference>
<protein>
    <recommendedName>
        <fullName>Probable G-protein coupled receptor 160</fullName>
    </recommendedName>
    <alternativeName>
        <fullName>G-protein coupled receptor GPCR1</fullName>
        <shortName>hGPCR1</shortName>
    </alternativeName>
</protein>
<organism>
    <name type="scientific">Homo sapiens</name>
    <name type="common">Human</name>
    <dbReference type="NCBI Taxonomy" id="9606"/>
    <lineage>
        <taxon>Eukaryota</taxon>
        <taxon>Metazoa</taxon>
        <taxon>Chordata</taxon>
        <taxon>Craniata</taxon>
        <taxon>Vertebrata</taxon>
        <taxon>Euteleostomi</taxon>
        <taxon>Mammalia</taxon>
        <taxon>Eutheria</taxon>
        <taxon>Euarchontoglires</taxon>
        <taxon>Primates</taxon>
        <taxon>Haplorrhini</taxon>
        <taxon>Catarrhini</taxon>
        <taxon>Hominidae</taxon>
        <taxon>Homo</taxon>
    </lineage>
</organism>
<gene>
    <name type="primary">GPR160</name>
    <name type="synonym">GPCR150</name>
</gene>
<sequence length="338" mass="39787">MTALSSENCSFQYQLRQTNQPLDVNYLLFLIILGKILLNILTLGMRRKNTCQNFMEYFCISLAFVDLLLLVNISIILYFRDFVLLSIRFTKYHICLFTQIISFTYGFLHYPVFLTACIDYCLNFSKTTKLSFKCQKLFYFFTVILIWISVLAYVLGDPAIYQSLKAQNAYSRHCPFYVSIQSYWLSFFMVMILFVAFITCWEEVTTLVQAIRITSYMNETILYFPFSSHSSYTVRSKKIFLSKLIVCFLSTWLPFVLLQVIIVLLKVQIPAYIEMNIPWLYFVNSFLIATVYWFNCHKLNLKDIGLPLDPFVNWKCCFIPLTIPNLEQIEKPISIMIC</sequence>
<name>GP160_HUMAN</name>
<proteinExistence type="evidence at protein level"/>
<dbReference type="EMBL" id="AJ249248">
    <property type="protein sequence ID" value="CAB55314.1"/>
    <property type="molecule type" value="mRNA"/>
</dbReference>
<dbReference type="EMBL" id="AB083583">
    <property type="protein sequence ID" value="BAB89296.1"/>
    <property type="molecule type" value="Genomic_DNA"/>
</dbReference>
<dbReference type="EMBL" id="CH471052">
    <property type="protein sequence ID" value="EAW78524.1"/>
    <property type="molecule type" value="Genomic_DNA"/>
</dbReference>
<dbReference type="EMBL" id="CH471052">
    <property type="protein sequence ID" value="EAW78525.1"/>
    <property type="molecule type" value="Genomic_DNA"/>
</dbReference>
<dbReference type="EMBL" id="CH471052">
    <property type="protein sequence ID" value="EAW78526.1"/>
    <property type="molecule type" value="Genomic_DNA"/>
</dbReference>
<dbReference type="EMBL" id="BC000181">
    <property type="protein sequence ID" value="AAH00181.1"/>
    <property type="molecule type" value="mRNA"/>
</dbReference>
<dbReference type="CCDS" id="CCDS3211.1"/>
<dbReference type="RefSeq" id="NP_055188.1">
    <property type="nucleotide sequence ID" value="NM_014373.3"/>
</dbReference>
<dbReference type="RefSeq" id="XP_005247403.1">
    <property type="nucleotide sequence ID" value="XM_005247346.5"/>
</dbReference>
<dbReference type="RefSeq" id="XP_005247404.1">
    <property type="nucleotide sequence ID" value="XM_005247347.5"/>
</dbReference>
<dbReference type="RefSeq" id="XP_006713645.1">
    <property type="nucleotide sequence ID" value="XM_006713582.3"/>
</dbReference>
<dbReference type="RefSeq" id="XP_011510980.1">
    <property type="nucleotide sequence ID" value="XM_011512678.2"/>
</dbReference>
<dbReference type="RefSeq" id="XP_016861650.1">
    <property type="nucleotide sequence ID" value="XM_017006161.3"/>
</dbReference>
<dbReference type="RefSeq" id="XP_016861651.1">
    <property type="nucleotide sequence ID" value="XM_017006162.1"/>
</dbReference>
<dbReference type="RefSeq" id="XP_024309217.1">
    <property type="nucleotide sequence ID" value="XM_024453449.2"/>
</dbReference>
<dbReference type="RefSeq" id="XP_024309218.1">
    <property type="nucleotide sequence ID" value="XM_024453450.2"/>
</dbReference>
<dbReference type="RefSeq" id="XP_047303915.1">
    <property type="nucleotide sequence ID" value="XM_047447959.1"/>
</dbReference>
<dbReference type="RefSeq" id="XP_054202130.1">
    <property type="nucleotide sequence ID" value="XM_054346155.1"/>
</dbReference>
<dbReference type="RefSeq" id="XP_054202131.1">
    <property type="nucleotide sequence ID" value="XM_054346156.1"/>
</dbReference>
<dbReference type="RefSeq" id="XP_054202132.1">
    <property type="nucleotide sequence ID" value="XM_054346157.1"/>
</dbReference>
<dbReference type="RefSeq" id="XP_054202133.1">
    <property type="nucleotide sequence ID" value="XM_054346158.1"/>
</dbReference>
<dbReference type="SMR" id="Q9UJ42"/>
<dbReference type="BioGRID" id="117943">
    <property type="interactions" value="3"/>
</dbReference>
<dbReference type="FunCoup" id="Q9UJ42">
    <property type="interactions" value="67"/>
</dbReference>
<dbReference type="IntAct" id="Q9UJ42">
    <property type="interactions" value="6"/>
</dbReference>
<dbReference type="STRING" id="9606.ENSP00000348161"/>
<dbReference type="BindingDB" id="Q9UJ42"/>
<dbReference type="ChEMBL" id="CHEMBL1777664"/>
<dbReference type="TCDB" id="9.A.14.19.1">
    <property type="family name" value="the g-protein-coupled receptor (gpcr) family"/>
</dbReference>
<dbReference type="GlyCosmos" id="Q9UJ42">
    <property type="glycosylation" value="1 site, No reported glycans"/>
</dbReference>
<dbReference type="GlyGen" id="Q9UJ42">
    <property type="glycosylation" value="1 site"/>
</dbReference>
<dbReference type="iPTMnet" id="Q9UJ42"/>
<dbReference type="PhosphoSitePlus" id="Q9UJ42"/>
<dbReference type="BioMuta" id="GPR160"/>
<dbReference type="DMDM" id="48428180"/>
<dbReference type="jPOST" id="Q9UJ42"/>
<dbReference type="PaxDb" id="9606-ENSP00000348161"/>
<dbReference type="PeptideAtlas" id="Q9UJ42"/>
<dbReference type="Antibodypedia" id="1940">
    <property type="antibodies" value="224 antibodies from 29 providers"/>
</dbReference>
<dbReference type="DNASU" id="26996"/>
<dbReference type="Ensembl" id="ENST00000355897.10">
    <property type="protein sequence ID" value="ENSP00000348161.5"/>
    <property type="gene ID" value="ENSG00000173890.17"/>
</dbReference>
<dbReference type="GeneID" id="26996"/>
<dbReference type="KEGG" id="hsa:26996"/>
<dbReference type="MANE-Select" id="ENST00000355897.10">
    <property type="protein sequence ID" value="ENSP00000348161.5"/>
    <property type="RefSeq nucleotide sequence ID" value="NM_014373.3"/>
    <property type="RefSeq protein sequence ID" value="NP_055188.1"/>
</dbReference>
<dbReference type="UCSC" id="uc003fgi.4">
    <property type="organism name" value="human"/>
</dbReference>
<dbReference type="AGR" id="HGNC:23693"/>
<dbReference type="CTD" id="26996"/>
<dbReference type="DisGeNET" id="26996"/>
<dbReference type="GeneCards" id="GPR160"/>
<dbReference type="HGNC" id="HGNC:23693">
    <property type="gene designation" value="GPR160"/>
</dbReference>
<dbReference type="HPA" id="ENSG00000173890">
    <property type="expression patterns" value="Tissue enhanced (bone marrow, parathyroid gland)"/>
</dbReference>
<dbReference type="neXtProt" id="NX_Q9UJ42"/>
<dbReference type="OpenTargets" id="ENSG00000173890"/>
<dbReference type="PharmGKB" id="PA134936972"/>
<dbReference type="VEuPathDB" id="HostDB:ENSG00000173890"/>
<dbReference type="eggNOG" id="ENOG502RTG9">
    <property type="taxonomic scope" value="Eukaryota"/>
</dbReference>
<dbReference type="GeneTree" id="ENSGT00390000015520"/>
<dbReference type="HOGENOM" id="CLU_826300_0_0_1"/>
<dbReference type="InParanoid" id="Q9UJ42"/>
<dbReference type="OMA" id="SYQCPFY"/>
<dbReference type="OrthoDB" id="9947933at2759"/>
<dbReference type="PAN-GO" id="Q9UJ42">
    <property type="GO annotations" value="2 GO annotations based on evolutionary models"/>
</dbReference>
<dbReference type="PhylomeDB" id="Q9UJ42"/>
<dbReference type="TreeFam" id="TF335541"/>
<dbReference type="PathwayCommons" id="Q9UJ42"/>
<dbReference type="SignaLink" id="Q9UJ42"/>
<dbReference type="BioGRID-ORCS" id="26996">
    <property type="hits" value="11 hits in 1141 CRISPR screens"/>
</dbReference>
<dbReference type="ChiTaRS" id="GPR160">
    <property type="organism name" value="human"/>
</dbReference>
<dbReference type="GeneWiki" id="GPR160"/>
<dbReference type="GenomeRNAi" id="26996"/>
<dbReference type="Pharos" id="Q9UJ42">
    <property type="development level" value="Tbio"/>
</dbReference>
<dbReference type="PRO" id="PR:Q9UJ42"/>
<dbReference type="Proteomes" id="UP000005640">
    <property type="component" value="Chromosome 3"/>
</dbReference>
<dbReference type="RNAct" id="Q9UJ42">
    <property type="molecule type" value="protein"/>
</dbReference>
<dbReference type="Bgee" id="ENSG00000173890">
    <property type="expression patterns" value="Expressed in ileal mucosa and 147 other cell types or tissues"/>
</dbReference>
<dbReference type="ExpressionAtlas" id="Q9UJ42">
    <property type="expression patterns" value="baseline and differential"/>
</dbReference>
<dbReference type="GO" id="GO:0005886">
    <property type="term" value="C:plasma membrane"/>
    <property type="evidence" value="ECO:0000314"/>
    <property type="project" value="HPA"/>
</dbReference>
<dbReference type="GO" id="GO:0043235">
    <property type="term" value="C:receptor complex"/>
    <property type="evidence" value="ECO:0000314"/>
    <property type="project" value="MGI"/>
</dbReference>
<dbReference type="GO" id="GO:0004930">
    <property type="term" value="F:G protein-coupled receptor activity"/>
    <property type="evidence" value="ECO:0007669"/>
    <property type="project" value="UniProtKB-KW"/>
</dbReference>
<dbReference type="FunFam" id="1.20.1070.10:FF:000336">
    <property type="entry name" value="Probable G-protein coupled receptor 160"/>
    <property type="match status" value="1"/>
</dbReference>
<dbReference type="Gene3D" id="1.20.1070.10">
    <property type="entry name" value="Rhodopsin 7-helix transmembrane proteins"/>
    <property type="match status" value="1"/>
</dbReference>
<dbReference type="InterPro" id="IPR017452">
    <property type="entry name" value="GPCR_Rhodpsn_7TM"/>
</dbReference>
<dbReference type="InterPro" id="IPR042353">
    <property type="entry name" value="GPR160"/>
</dbReference>
<dbReference type="PANTHER" id="PTHR15573">
    <property type="entry name" value="G-PROTEIN COUPLED RECEPTOR 160-RELATED"/>
    <property type="match status" value="1"/>
</dbReference>
<dbReference type="PANTHER" id="PTHR15573:SF0">
    <property type="entry name" value="G-PROTEIN COUPLED RECEPTOR 160-RELATED"/>
    <property type="match status" value="1"/>
</dbReference>
<dbReference type="PROSITE" id="PS50262">
    <property type="entry name" value="G_PROTEIN_RECEP_F1_2"/>
    <property type="match status" value="1"/>
</dbReference>
<evidence type="ECO:0000255" key="1"/>
<evidence type="ECO:0000255" key="2">
    <source>
        <dbReference type="PROSITE-ProRule" id="PRU00521"/>
    </source>
</evidence>
<feature type="chain" id="PRO_0000069643" description="Probable G-protein coupled receptor 160">
    <location>
        <begin position="1"/>
        <end position="338"/>
    </location>
</feature>
<feature type="topological domain" description="Extracellular" evidence="1">
    <location>
        <begin position="1"/>
        <end position="23"/>
    </location>
</feature>
<feature type="transmembrane region" description="Helical; Name=1" evidence="1">
    <location>
        <begin position="24"/>
        <end position="44"/>
    </location>
</feature>
<feature type="topological domain" description="Cytoplasmic" evidence="1">
    <location>
        <begin position="45"/>
        <end position="58"/>
    </location>
</feature>
<feature type="transmembrane region" description="Helical; Name=2" evidence="1">
    <location>
        <begin position="59"/>
        <end position="79"/>
    </location>
</feature>
<feature type="topological domain" description="Extracellular" evidence="1">
    <location>
        <begin position="80"/>
        <end position="93"/>
    </location>
</feature>
<feature type="transmembrane region" description="Helical; Name=3" evidence="1">
    <location>
        <begin position="94"/>
        <end position="114"/>
    </location>
</feature>
<feature type="topological domain" description="Cytoplasmic" evidence="1">
    <location>
        <begin position="115"/>
        <end position="136"/>
    </location>
</feature>
<feature type="transmembrane region" description="Helical; Name=4" evidence="1">
    <location>
        <begin position="137"/>
        <end position="157"/>
    </location>
</feature>
<feature type="topological domain" description="Extracellular" evidence="1">
    <location>
        <begin position="158"/>
        <end position="177"/>
    </location>
</feature>
<feature type="transmembrane region" description="Helical; Name=5" evidence="1">
    <location>
        <begin position="178"/>
        <end position="198"/>
    </location>
</feature>
<feature type="topological domain" description="Cytoplasmic" evidence="1">
    <location>
        <begin position="199"/>
        <end position="244"/>
    </location>
</feature>
<feature type="transmembrane region" description="Helical; Name=6" evidence="1">
    <location>
        <begin position="245"/>
        <end position="265"/>
    </location>
</feature>
<feature type="topological domain" description="Extracellular" evidence="1">
    <location>
        <begin position="266"/>
        <end position="268"/>
    </location>
</feature>
<feature type="transmembrane region" description="Helical; Name=7" evidence="1">
    <location>
        <begin position="269"/>
        <end position="289"/>
    </location>
</feature>
<feature type="topological domain" description="Cytoplasmic" evidence="1">
    <location>
        <begin position="290"/>
        <end position="338"/>
    </location>
</feature>
<feature type="glycosylation site" description="N-linked (GlcNAc...) asparagine" evidence="1">
    <location>
        <position position="8"/>
    </location>
</feature>